<gene>
    <name type="ORF">PtaqContig2303</name>
</gene>
<proteinExistence type="inferred from homology"/>
<organism>
    <name type="scientific">Pteridium aquilinum subsp. aquilinum</name>
    <name type="common">Bracken fern</name>
    <dbReference type="NCBI Taxonomy" id="104588"/>
    <lineage>
        <taxon>Eukaryota</taxon>
        <taxon>Viridiplantae</taxon>
        <taxon>Streptophyta</taxon>
        <taxon>Embryophyta</taxon>
        <taxon>Tracheophyta</taxon>
        <taxon>Polypodiopsida</taxon>
        <taxon>Polypodiidae</taxon>
        <taxon>Polypodiales</taxon>
        <taxon>Dennstaedtiineae</taxon>
        <taxon>Dennstaedtiaceae</taxon>
        <taxon>Pteridium</taxon>
    </lineage>
</organism>
<reference key="1">
    <citation type="journal article" date="2011" name="BMC Genomics">
        <title>De novo characterization of the gametophyte transcriptome in bracken fern, Pteridium aquilinum.</title>
        <authorList>
            <person name="Der J.P."/>
            <person name="Barker M.S."/>
            <person name="Wickett N.J."/>
            <person name="dePamphilis C.W."/>
            <person name="Wolf P.G."/>
        </authorList>
    </citation>
    <scope>NUCLEOTIDE SEQUENCE [LARGE SCALE MRNA]</scope>
    <source>
        <strain>Wolf 83</strain>
        <tissue>Gametophyte</tissue>
    </source>
</reference>
<reference key="2">
    <citation type="journal article" date="2014" name="Plant Physiol.">
        <title>Functional and evolutionary analysis of the CASPARIAN STRIP MEMBRANE DOMAIN PROTEIN family.</title>
        <authorList>
            <person name="Roppolo D."/>
            <person name="Boeckmann B."/>
            <person name="Pfister A."/>
            <person name="Boutet E."/>
            <person name="Rubio M.C."/>
            <person name="Denervaud-Tendon V."/>
            <person name="Vermeer J.E."/>
            <person name="Gheyselinck J."/>
            <person name="Xenarios I."/>
            <person name="Geldner N."/>
        </authorList>
    </citation>
    <scope>GENE FAMILY</scope>
    <scope>NOMENCLATURE</scope>
</reference>
<keyword id="KW-1003">Cell membrane</keyword>
<keyword id="KW-0472">Membrane</keyword>
<keyword id="KW-0812">Transmembrane</keyword>
<keyword id="KW-1133">Transmembrane helix</keyword>
<feature type="chain" id="PRO_0000417796" description="CASP-like protein 2U1">
    <location>
        <begin position="1"/>
        <end position="196"/>
    </location>
</feature>
<feature type="topological domain" description="Cytoplasmic" evidence="2">
    <location>
        <begin position="1"/>
        <end position="11"/>
    </location>
</feature>
<feature type="transmembrane region" description="Helical" evidence="2">
    <location>
        <begin position="12"/>
        <end position="32"/>
    </location>
</feature>
<feature type="topological domain" description="Extracellular" evidence="2">
    <location>
        <begin position="33"/>
        <end position="58"/>
    </location>
</feature>
<feature type="transmembrane region" description="Helical" evidence="2">
    <location>
        <begin position="59"/>
        <end position="79"/>
    </location>
</feature>
<feature type="topological domain" description="Cytoplasmic" evidence="2">
    <location>
        <begin position="80"/>
        <end position="95"/>
    </location>
</feature>
<feature type="transmembrane region" description="Helical" evidence="2">
    <location>
        <begin position="96"/>
        <end position="116"/>
    </location>
</feature>
<feature type="topological domain" description="Extracellular" evidence="2">
    <location>
        <begin position="117"/>
        <end position="148"/>
    </location>
</feature>
<feature type="transmembrane region" description="Helical" evidence="2">
    <location>
        <begin position="149"/>
        <end position="169"/>
    </location>
</feature>
<feature type="topological domain" description="Cytoplasmic" evidence="2">
    <location>
        <begin position="170"/>
        <end position="196"/>
    </location>
</feature>
<sequence length="196" mass="21462">MAPMECVRRRNVGELVLRCAATLVCMLSLMLLVRDQQIAVQEVGVTSVTTQLRYSSSTGLVYLVYANGLVALYCFVVVLTSSFNGGSVMRRNKSGAWALFVLDQVLACILLSAASAASEIAFLVEKGAKKTIWDSKCIVYGHFCRMLEVSIATSFIAVIMLGSICVLSAKQLFQQYTHYARIVNMVKLKSTPNSLL</sequence>
<name>CSPL3_PTEAA</name>
<dbReference type="SMR" id="P0DI24"/>
<dbReference type="GO" id="GO:0005886">
    <property type="term" value="C:plasma membrane"/>
    <property type="evidence" value="ECO:0007669"/>
    <property type="project" value="UniProtKB-SubCell"/>
</dbReference>
<dbReference type="InterPro" id="IPR006459">
    <property type="entry name" value="CASP/CASPL"/>
</dbReference>
<dbReference type="InterPro" id="IPR006702">
    <property type="entry name" value="CASP_dom"/>
</dbReference>
<dbReference type="NCBIfam" id="TIGR01569">
    <property type="entry name" value="A_tha_TIGR01569"/>
    <property type="match status" value="1"/>
</dbReference>
<dbReference type="PANTHER" id="PTHR33573:SF30">
    <property type="entry name" value="CASP-LIKE PROTEIN 2C1-RELATED"/>
    <property type="match status" value="1"/>
</dbReference>
<dbReference type="PANTHER" id="PTHR33573">
    <property type="entry name" value="CASP-LIKE PROTEIN 4A4"/>
    <property type="match status" value="1"/>
</dbReference>
<dbReference type="Pfam" id="PF04535">
    <property type="entry name" value="CASP_dom"/>
    <property type="match status" value="1"/>
</dbReference>
<evidence type="ECO:0000250" key="1"/>
<evidence type="ECO:0000255" key="2"/>
<evidence type="ECO:0000305" key="3"/>
<comment type="subunit">
    <text evidence="1">Homodimer and heterodimers.</text>
</comment>
<comment type="subcellular location">
    <subcellularLocation>
        <location evidence="1">Cell membrane</location>
        <topology evidence="1">Multi-pass membrane protein</topology>
    </subcellularLocation>
</comment>
<comment type="similarity">
    <text evidence="3">Belongs to the Casparian strip membrane proteins (CASP) family.</text>
</comment>
<protein>
    <recommendedName>
        <fullName>CASP-like protein 2U1</fullName>
        <shortName>PaCASPL2U1</shortName>
    </recommendedName>
</protein>
<accession>P0DI24</accession>